<sequence>MMKNLPEVGNGGGSGFPAVSVGNKKNKYQRMDSDAEESQNHREAEARNSRTRKYVMACAFFASLNNVLLGYDVGVMSGAVLFIQQDLKITEVQTEVLIGSLSIISLFGSLAGGRTSDSIGRKWTMALAALVFQTGAAVMAVAPSFEVLMIGRTLAGIGIGLGVMIAPVYIAEISPTVARGFFTSFPEIFINLGILLGYVSNYAFSGLSVHISWRIMLAVGILPSVFIGFALCVIPESPRWLVMKGRVDSAREVLMKTNERDDEAEERLAEIQLAAAHTEGSEDRPVWRELLSPSPVVRKMLIVGFGIQCFQQITGIDATVYYSPEILKEAGIQDETKLLAATVAVGVTKTVFILFATFLIDSVGRKPLLYVSTIGMTLCLFCLSFTLTFLGQGTLGITLALLFVCGNVAFFSIGMGPVCWVLTSEIFPLRLRAQASALGAVGNRVCSGLVAMSFLSVSRAITVGGTFFVFSLVSALSVIFVYVLVPETSGKSLEQIELMFQGGLERKDGEVELGDAERLVRKEQEF</sequence>
<evidence type="ECO:0000250" key="1"/>
<evidence type="ECO:0000255" key="2"/>
<evidence type="ECO:0000256" key="3">
    <source>
        <dbReference type="SAM" id="MobiDB-lite"/>
    </source>
</evidence>
<evidence type="ECO:0000305" key="4"/>
<gene>
    <name type="primary">PLT4</name>
    <name type="ordered locus">At2g20780</name>
    <name type="ORF">F5H14.25</name>
</gene>
<reference key="1">
    <citation type="journal article" date="1999" name="Nature">
        <title>Sequence and analysis of chromosome 2 of the plant Arabidopsis thaliana.</title>
        <authorList>
            <person name="Lin X."/>
            <person name="Kaul S."/>
            <person name="Rounsley S.D."/>
            <person name="Shea T.P."/>
            <person name="Benito M.-I."/>
            <person name="Town C.D."/>
            <person name="Fujii C.Y."/>
            <person name="Mason T.M."/>
            <person name="Bowman C.L."/>
            <person name="Barnstead M.E."/>
            <person name="Feldblyum T.V."/>
            <person name="Buell C.R."/>
            <person name="Ketchum K.A."/>
            <person name="Lee J.J."/>
            <person name="Ronning C.M."/>
            <person name="Koo H.L."/>
            <person name="Moffat K.S."/>
            <person name="Cronin L.A."/>
            <person name="Shen M."/>
            <person name="Pai G."/>
            <person name="Van Aken S."/>
            <person name="Umayam L."/>
            <person name="Tallon L.J."/>
            <person name="Gill J.E."/>
            <person name="Adams M.D."/>
            <person name="Carrera A.J."/>
            <person name="Creasy T.H."/>
            <person name="Goodman H.M."/>
            <person name="Somerville C.R."/>
            <person name="Copenhaver G.P."/>
            <person name="Preuss D."/>
            <person name="Nierman W.C."/>
            <person name="White O."/>
            <person name="Eisen J.A."/>
            <person name="Salzberg S.L."/>
            <person name="Fraser C.M."/>
            <person name="Venter J.C."/>
        </authorList>
    </citation>
    <scope>NUCLEOTIDE SEQUENCE [LARGE SCALE GENOMIC DNA]</scope>
    <source>
        <strain>cv. Columbia</strain>
    </source>
</reference>
<reference key="2">
    <citation type="journal article" date="2017" name="Plant J.">
        <title>Araport11: a complete reannotation of the Arabidopsis thaliana reference genome.</title>
        <authorList>
            <person name="Cheng C.Y."/>
            <person name="Krishnakumar V."/>
            <person name="Chan A.P."/>
            <person name="Thibaud-Nissen F."/>
            <person name="Schobel S."/>
            <person name="Town C.D."/>
        </authorList>
    </citation>
    <scope>GENOME REANNOTATION</scope>
    <source>
        <strain>cv. Columbia</strain>
    </source>
</reference>
<reference key="3">
    <citation type="submission" date="2006-07" db="EMBL/GenBank/DDBJ databases">
        <title>Large-scale analysis of RIKEN Arabidopsis full-length (RAFL) cDNAs.</title>
        <authorList>
            <person name="Totoki Y."/>
            <person name="Seki M."/>
            <person name="Ishida J."/>
            <person name="Nakajima M."/>
            <person name="Enju A."/>
            <person name="Kamiya A."/>
            <person name="Narusaka M."/>
            <person name="Shin-i T."/>
            <person name="Nakagawa M."/>
            <person name="Sakamoto N."/>
            <person name="Oishi K."/>
            <person name="Kohara Y."/>
            <person name="Kobayashi M."/>
            <person name="Toyoda A."/>
            <person name="Sakaki Y."/>
            <person name="Sakurai T."/>
            <person name="Iida K."/>
            <person name="Akiyama K."/>
            <person name="Satou M."/>
            <person name="Toyoda T."/>
            <person name="Konagaya A."/>
            <person name="Carninci P."/>
            <person name="Kawai J."/>
            <person name="Hayashizaki Y."/>
            <person name="Shinozaki K."/>
        </authorList>
    </citation>
    <scope>NUCLEOTIDE SEQUENCE [LARGE SCALE MRNA]</scope>
    <source>
        <strain>cv. Columbia</strain>
    </source>
</reference>
<reference key="4">
    <citation type="journal article" date="2006" name="BMC Evol. Biol.">
        <title>The monosaccharide transporter gene family in land plants is ancient and shows differential subfamily expression and expansion across lineages.</title>
        <authorList>
            <person name="Johnson D.A."/>
            <person name="Hill J.P."/>
            <person name="Thomas M.A."/>
        </authorList>
    </citation>
    <scope>GENE FAMILY</scope>
</reference>
<dbReference type="EMBL" id="AC006234">
    <property type="protein sequence ID" value="AAD20917.1"/>
    <property type="status" value="ALT_SEQ"/>
    <property type="molecule type" value="Genomic_DNA"/>
</dbReference>
<dbReference type="EMBL" id="CP002685">
    <property type="protein sequence ID" value="AEC07069.1"/>
    <property type="molecule type" value="Genomic_DNA"/>
</dbReference>
<dbReference type="EMBL" id="AK227042">
    <property type="protein sequence ID" value="BAE99102.1"/>
    <property type="molecule type" value="mRNA"/>
</dbReference>
<dbReference type="PIR" id="C84593">
    <property type="entry name" value="C84593"/>
</dbReference>
<dbReference type="RefSeq" id="NP_179671.2">
    <property type="nucleotide sequence ID" value="NM_127643.5"/>
</dbReference>
<dbReference type="SMR" id="Q0WUU6"/>
<dbReference type="BioGRID" id="1960">
    <property type="interactions" value="8"/>
</dbReference>
<dbReference type="FunCoup" id="Q0WUU6">
    <property type="interactions" value="146"/>
</dbReference>
<dbReference type="IntAct" id="Q0WUU6">
    <property type="interactions" value="4"/>
</dbReference>
<dbReference type="STRING" id="3702.Q0WUU6"/>
<dbReference type="GlyGen" id="Q0WUU6">
    <property type="glycosylation" value="2 sites"/>
</dbReference>
<dbReference type="iPTMnet" id="Q0WUU6"/>
<dbReference type="PaxDb" id="3702-AT2G20780.1"/>
<dbReference type="ProteomicsDB" id="234973"/>
<dbReference type="EnsemblPlants" id="AT2G20780.1">
    <property type="protein sequence ID" value="AT2G20780.1"/>
    <property type="gene ID" value="AT2G20780"/>
</dbReference>
<dbReference type="GeneID" id="816607"/>
<dbReference type="Gramene" id="AT2G20780.1">
    <property type="protein sequence ID" value="AT2G20780.1"/>
    <property type="gene ID" value="AT2G20780"/>
</dbReference>
<dbReference type="KEGG" id="ath:AT2G20780"/>
<dbReference type="Araport" id="AT2G20780"/>
<dbReference type="TAIR" id="AT2G20780"/>
<dbReference type="eggNOG" id="KOG0254">
    <property type="taxonomic scope" value="Eukaryota"/>
</dbReference>
<dbReference type="HOGENOM" id="CLU_001265_30_5_1"/>
<dbReference type="InParanoid" id="Q0WUU6"/>
<dbReference type="OMA" id="VAQFLCM"/>
<dbReference type="OrthoDB" id="6339427at2759"/>
<dbReference type="PhylomeDB" id="Q0WUU6"/>
<dbReference type="PRO" id="PR:Q0WUU6"/>
<dbReference type="Proteomes" id="UP000006548">
    <property type="component" value="Chromosome 2"/>
</dbReference>
<dbReference type="ExpressionAtlas" id="Q0WUU6">
    <property type="expression patterns" value="baseline and differential"/>
</dbReference>
<dbReference type="GO" id="GO:0016020">
    <property type="term" value="C:membrane"/>
    <property type="evidence" value="ECO:0007669"/>
    <property type="project" value="UniProtKB-SubCell"/>
</dbReference>
<dbReference type="GO" id="GO:0005351">
    <property type="term" value="F:carbohydrate:proton symporter activity"/>
    <property type="evidence" value="ECO:0007669"/>
    <property type="project" value="InterPro"/>
</dbReference>
<dbReference type="CDD" id="cd17437">
    <property type="entry name" value="MFS_PLT"/>
    <property type="match status" value="1"/>
</dbReference>
<dbReference type="FunFam" id="1.20.1250.20:FF:000025">
    <property type="entry name" value="probable polyol transporter 4"/>
    <property type="match status" value="1"/>
</dbReference>
<dbReference type="Gene3D" id="1.20.1250.20">
    <property type="entry name" value="MFS general substrate transporter like domains"/>
    <property type="match status" value="1"/>
</dbReference>
<dbReference type="InterPro" id="IPR020846">
    <property type="entry name" value="MFS_dom"/>
</dbReference>
<dbReference type="InterPro" id="IPR005828">
    <property type="entry name" value="MFS_sugar_transport-like"/>
</dbReference>
<dbReference type="InterPro" id="IPR036259">
    <property type="entry name" value="MFS_trans_sf"/>
</dbReference>
<dbReference type="InterPro" id="IPR050814">
    <property type="entry name" value="Myo-inositol_Transporter"/>
</dbReference>
<dbReference type="InterPro" id="IPR044776">
    <property type="entry name" value="PLT1-6"/>
</dbReference>
<dbReference type="InterPro" id="IPR003663">
    <property type="entry name" value="Sugar/inositol_transpt"/>
</dbReference>
<dbReference type="InterPro" id="IPR005829">
    <property type="entry name" value="Sugar_transporter_CS"/>
</dbReference>
<dbReference type="NCBIfam" id="TIGR00879">
    <property type="entry name" value="SP"/>
    <property type="match status" value="1"/>
</dbReference>
<dbReference type="PANTHER" id="PTHR48020">
    <property type="entry name" value="PROTON MYO-INOSITOL COTRANSPORTER"/>
    <property type="match status" value="1"/>
</dbReference>
<dbReference type="PANTHER" id="PTHR48020:SF49">
    <property type="entry name" value="SUGAR TRANSPORTER"/>
    <property type="match status" value="1"/>
</dbReference>
<dbReference type="Pfam" id="PF00083">
    <property type="entry name" value="Sugar_tr"/>
    <property type="match status" value="1"/>
</dbReference>
<dbReference type="PRINTS" id="PR00171">
    <property type="entry name" value="SUGRTRNSPORT"/>
</dbReference>
<dbReference type="SUPFAM" id="SSF103473">
    <property type="entry name" value="MFS general substrate transporter"/>
    <property type="match status" value="1"/>
</dbReference>
<dbReference type="PROSITE" id="PS50850">
    <property type="entry name" value="MFS"/>
    <property type="match status" value="1"/>
</dbReference>
<dbReference type="PROSITE" id="PS00216">
    <property type="entry name" value="SUGAR_TRANSPORT_1"/>
    <property type="match status" value="1"/>
</dbReference>
<dbReference type="PROSITE" id="PS00217">
    <property type="entry name" value="SUGAR_TRANSPORT_2"/>
    <property type="match status" value="1"/>
</dbReference>
<accession>Q0WUU6</accession>
<accession>Q9SKT9</accession>
<keyword id="KW-0472">Membrane</keyword>
<keyword id="KW-1185">Reference proteome</keyword>
<keyword id="KW-0762">Sugar transport</keyword>
<keyword id="KW-0769">Symport</keyword>
<keyword id="KW-0812">Transmembrane</keyword>
<keyword id="KW-1133">Transmembrane helix</keyword>
<keyword id="KW-0813">Transport</keyword>
<feature type="chain" id="PRO_0000259872" description="Probable polyol transporter 4">
    <location>
        <begin position="1"/>
        <end position="526"/>
    </location>
</feature>
<feature type="transmembrane region" description="Helical; Name=1" evidence="2">
    <location>
        <begin position="63"/>
        <end position="83"/>
    </location>
</feature>
<feature type="transmembrane region" description="Helical; Name=2" evidence="2">
    <location>
        <begin position="92"/>
        <end position="112"/>
    </location>
</feature>
<feature type="transmembrane region" description="Helical; Name=3" evidence="2">
    <location>
        <begin position="125"/>
        <end position="145"/>
    </location>
</feature>
<feature type="transmembrane region" description="Helical; Name=4" evidence="2">
    <location>
        <begin position="153"/>
        <end position="173"/>
    </location>
</feature>
<feature type="transmembrane region" description="Helical; Name=5" evidence="2">
    <location>
        <begin position="180"/>
        <end position="200"/>
    </location>
</feature>
<feature type="transmembrane region" description="Helical; Name=6" evidence="2">
    <location>
        <begin position="215"/>
        <end position="235"/>
    </location>
</feature>
<feature type="transmembrane region" description="Helical; Name=7" evidence="2">
    <location>
        <begin position="300"/>
        <end position="320"/>
    </location>
</feature>
<feature type="transmembrane region" description="Helical; Name=8" evidence="2">
    <location>
        <begin position="340"/>
        <end position="360"/>
    </location>
</feature>
<feature type="transmembrane region" description="Helical; Name=9" evidence="2">
    <location>
        <begin position="371"/>
        <end position="391"/>
    </location>
</feature>
<feature type="transmembrane region" description="Helical; Name=10" evidence="2">
    <location>
        <begin position="395"/>
        <end position="415"/>
    </location>
</feature>
<feature type="transmembrane region" description="Helical; Name=11" evidence="2">
    <location>
        <begin position="437"/>
        <end position="457"/>
    </location>
</feature>
<feature type="transmembrane region" description="Helical; Name=12" evidence="2">
    <location>
        <begin position="465"/>
        <end position="485"/>
    </location>
</feature>
<feature type="region of interest" description="Disordered" evidence="3">
    <location>
        <begin position="1"/>
        <end position="21"/>
    </location>
</feature>
<feature type="region of interest" description="Disordered" evidence="3">
    <location>
        <begin position="28"/>
        <end position="47"/>
    </location>
</feature>
<feature type="compositionally biased region" description="Basic and acidic residues" evidence="3">
    <location>
        <begin position="29"/>
        <end position="47"/>
    </location>
</feature>
<name>PLT4_ARATH</name>
<organism>
    <name type="scientific">Arabidopsis thaliana</name>
    <name type="common">Mouse-ear cress</name>
    <dbReference type="NCBI Taxonomy" id="3702"/>
    <lineage>
        <taxon>Eukaryota</taxon>
        <taxon>Viridiplantae</taxon>
        <taxon>Streptophyta</taxon>
        <taxon>Embryophyta</taxon>
        <taxon>Tracheophyta</taxon>
        <taxon>Spermatophyta</taxon>
        <taxon>Magnoliopsida</taxon>
        <taxon>eudicotyledons</taxon>
        <taxon>Gunneridae</taxon>
        <taxon>Pentapetalae</taxon>
        <taxon>rosids</taxon>
        <taxon>malvids</taxon>
        <taxon>Brassicales</taxon>
        <taxon>Brassicaceae</taxon>
        <taxon>Camelineae</taxon>
        <taxon>Arabidopsis</taxon>
    </lineage>
</organism>
<comment type="function">
    <text evidence="1">Plasma membrane sugar-proton symporter.</text>
</comment>
<comment type="subcellular location">
    <subcellularLocation>
        <location evidence="1">Membrane</location>
        <topology evidence="1">Multi-pass membrane protein</topology>
    </subcellularLocation>
</comment>
<comment type="similarity">
    <text evidence="4">Belongs to the major facilitator superfamily. Sugar transporter (TC 2.A.1.1) family.</text>
</comment>
<comment type="sequence caution" evidence="4">
    <conflict type="erroneous gene model prediction">
        <sequence resource="EMBL-CDS" id="AAD20917"/>
    </conflict>
</comment>
<proteinExistence type="evidence at transcript level"/>
<protein>
    <recommendedName>
        <fullName>Probable polyol transporter 4</fullName>
    </recommendedName>
</protein>